<gene>
    <name evidence="1" type="primary">mnmA</name>
    <name type="ordered locus">Bpet2727</name>
</gene>
<proteinExistence type="inferred from homology"/>
<reference key="1">
    <citation type="journal article" date="2008" name="BMC Genomics">
        <title>The missing link: Bordetella petrii is endowed with both the metabolic versatility of environmental bacteria and virulence traits of pathogenic Bordetellae.</title>
        <authorList>
            <person name="Gross R."/>
            <person name="Guzman C.A."/>
            <person name="Sebaihia M."/>
            <person name="Martin dos Santos V.A.P."/>
            <person name="Pieper D.H."/>
            <person name="Koebnik R."/>
            <person name="Lechner M."/>
            <person name="Bartels D."/>
            <person name="Buhrmester J."/>
            <person name="Choudhuri J.V."/>
            <person name="Ebensen T."/>
            <person name="Gaigalat L."/>
            <person name="Herrmann S."/>
            <person name="Khachane A.N."/>
            <person name="Larisch C."/>
            <person name="Link S."/>
            <person name="Linke B."/>
            <person name="Meyer F."/>
            <person name="Mormann S."/>
            <person name="Nakunst D."/>
            <person name="Rueckert C."/>
            <person name="Schneiker-Bekel S."/>
            <person name="Schulze K."/>
            <person name="Voerholter F.-J."/>
            <person name="Yevsa T."/>
            <person name="Engle J.T."/>
            <person name="Goldman W.E."/>
            <person name="Puehler A."/>
            <person name="Goebel U.B."/>
            <person name="Goesmann A."/>
            <person name="Bloecker H."/>
            <person name="Kaiser O."/>
            <person name="Martinez-Arias R."/>
        </authorList>
    </citation>
    <scope>NUCLEOTIDE SEQUENCE [LARGE SCALE GENOMIC DNA]</scope>
    <source>
        <strain>ATCC BAA-461 / DSM 12804 / CCUG 43448</strain>
    </source>
</reference>
<evidence type="ECO:0000255" key="1">
    <source>
        <dbReference type="HAMAP-Rule" id="MF_00144"/>
    </source>
</evidence>
<feature type="chain" id="PRO_0000349543" description="tRNA-specific 2-thiouridylase MnmA">
    <location>
        <begin position="1"/>
        <end position="376"/>
    </location>
</feature>
<feature type="region of interest" description="Interaction with target base in tRNA" evidence="1">
    <location>
        <begin position="105"/>
        <end position="107"/>
    </location>
</feature>
<feature type="region of interest" description="Interaction with tRNA" evidence="1">
    <location>
        <begin position="160"/>
        <end position="162"/>
    </location>
</feature>
<feature type="region of interest" description="Interaction with tRNA" evidence="1">
    <location>
        <begin position="326"/>
        <end position="327"/>
    </location>
</feature>
<feature type="active site" description="Nucleophile" evidence="1">
    <location>
        <position position="110"/>
    </location>
</feature>
<feature type="active site" description="Cysteine persulfide intermediate" evidence="1">
    <location>
        <position position="210"/>
    </location>
</feature>
<feature type="binding site" evidence="1">
    <location>
        <begin position="19"/>
        <end position="26"/>
    </location>
    <ligand>
        <name>ATP</name>
        <dbReference type="ChEBI" id="CHEBI:30616"/>
    </ligand>
</feature>
<feature type="binding site" evidence="1">
    <location>
        <position position="45"/>
    </location>
    <ligand>
        <name>ATP</name>
        <dbReference type="ChEBI" id="CHEBI:30616"/>
    </ligand>
</feature>
<feature type="binding site" evidence="1">
    <location>
        <position position="134"/>
    </location>
    <ligand>
        <name>ATP</name>
        <dbReference type="ChEBI" id="CHEBI:30616"/>
    </ligand>
</feature>
<feature type="site" description="Interaction with tRNA" evidence="1">
    <location>
        <position position="135"/>
    </location>
</feature>
<feature type="site" description="Interaction with tRNA" evidence="1">
    <location>
        <position position="359"/>
    </location>
</feature>
<feature type="disulfide bond" description="Alternate" evidence="1">
    <location>
        <begin position="110"/>
        <end position="210"/>
    </location>
</feature>
<comment type="function">
    <text evidence="1">Catalyzes the 2-thiolation of uridine at the wobble position (U34) of tRNA, leading to the formation of s(2)U34.</text>
</comment>
<comment type="catalytic activity">
    <reaction evidence="1">
        <text>S-sulfanyl-L-cysteinyl-[protein] + uridine(34) in tRNA + AH2 + ATP = 2-thiouridine(34) in tRNA + L-cysteinyl-[protein] + A + AMP + diphosphate + H(+)</text>
        <dbReference type="Rhea" id="RHEA:47032"/>
        <dbReference type="Rhea" id="RHEA-COMP:10131"/>
        <dbReference type="Rhea" id="RHEA-COMP:11726"/>
        <dbReference type="Rhea" id="RHEA-COMP:11727"/>
        <dbReference type="Rhea" id="RHEA-COMP:11728"/>
        <dbReference type="ChEBI" id="CHEBI:13193"/>
        <dbReference type="ChEBI" id="CHEBI:15378"/>
        <dbReference type="ChEBI" id="CHEBI:17499"/>
        <dbReference type="ChEBI" id="CHEBI:29950"/>
        <dbReference type="ChEBI" id="CHEBI:30616"/>
        <dbReference type="ChEBI" id="CHEBI:33019"/>
        <dbReference type="ChEBI" id="CHEBI:61963"/>
        <dbReference type="ChEBI" id="CHEBI:65315"/>
        <dbReference type="ChEBI" id="CHEBI:87170"/>
        <dbReference type="ChEBI" id="CHEBI:456215"/>
        <dbReference type="EC" id="2.8.1.13"/>
    </reaction>
</comment>
<comment type="subcellular location">
    <subcellularLocation>
        <location evidence="1">Cytoplasm</location>
    </subcellularLocation>
</comment>
<comment type="similarity">
    <text evidence="1">Belongs to the MnmA/TRMU family.</text>
</comment>
<keyword id="KW-0067">ATP-binding</keyword>
<keyword id="KW-0963">Cytoplasm</keyword>
<keyword id="KW-1015">Disulfide bond</keyword>
<keyword id="KW-0547">Nucleotide-binding</keyword>
<keyword id="KW-0694">RNA-binding</keyword>
<keyword id="KW-0808">Transferase</keyword>
<keyword id="KW-0819">tRNA processing</keyword>
<keyword id="KW-0820">tRNA-binding</keyword>
<dbReference type="EC" id="2.8.1.13" evidence="1"/>
<dbReference type="EMBL" id="AM902716">
    <property type="protein sequence ID" value="CAP43069.1"/>
    <property type="molecule type" value="Genomic_DNA"/>
</dbReference>
<dbReference type="SMR" id="A9IQK6"/>
<dbReference type="STRING" id="94624.Bpet2727"/>
<dbReference type="KEGG" id="bpt:Bpet2727"/>
<dbReference type="eggNOG" id="COG0482">
    <property type="taxonomic scope" value="Bacteria"/>
</dbReference>
<dbReference type="Proteomes" id="UP000001225">
    <property type="component" value="Chromosome"/>
</dbReference>
<dbReference type="GO" id="GO:0005737">
    <property type="term" value="C:cytoplasm"/>
    <property type="evidence" value="ECO:0007669"/>
    <property type="project" value="UniProtKB-SubCell"/>
</dbReference>
<dbReference type="GO" id="GO:0005524">
    <property type="term" value="F:ATP binding"/>
    <property type="evidence" value="ECO:0007669"/>
    <property type="project" value="UniProtKB-KW"/>
</dbReference>
<dbReference type="GO" id="GO:0000049">
    <property type="term" value="F:tRNA binding"/>
    <property type="evidence" value="ECO:0007669"/>
    <property type="project" value="UniProtKB-KW"/>
</dbReference>
<dbReference type="GO" id="GO:0103016">
    <property type="term" value="F:tRNA-uridine 2-sulfurtransferase activity"/>
    <property type="evidence" value="ECO:0007669"/>
    <property type="project" value="UniProtKB-EC"/>
</dbReference>
<dbReference type="GO" id="GO:0002143">
    <property type="term" value="P:tRNA wobble position uridine thiolation"/>
    <property type="evidence" value="ECO:0007669"/>
    <property type="project" value="TreeGrafter"/>
</dbReference>
<dbReference type="CDD" id="cd01998">
    <property type="entry name" value="MnmA_TRMU-like"/>
    <property type="match status" value="1"/>
</dbReference>
<dbReference type="FunFam" id="2.30.30.280:FF:000001">
    <property type="entry name" value="tRNA-specific 2-thiouridylase MnmA"/>
    <property type="match status" value="1"/>
</dbReference>
<dbReference type="FunFam" id="2.40.30.10:FF:000023">
    <property type="entry name" value="tRNA-specific 2-thiouridylase MnmA"/>
    <property type="match status" value="1"/>
</dbReference>
<dbReference type="FunFam" id="3.40.50.620:FF:000004">
    <property type="entry name" value="tRNA-specific 2-thiouridylase MnmA"/>
    <property type="match status" value="1"/>
</dbReference>
<dbReference type="Gene3D" id="2.30.30.280">
    <property type="entry name" value="Adenine nucleotide alpha hydrolases-like domains"/>
    <property type="match status" value="1"/>
</dbReference>
<dbReference type="Gene3D" id="3.40.50.620">
    <property type="entry name" value="HUPs"/>
    <property type="match status" value="1"/>
</dbReference>
<dbReference type="Gene3D" id="2.40.30.10">
    <property type="entry name" value="Translation factors"/>
    <property type="match status" value="1"/>
</dbReference>
<dbReference type="HAMAP" id="MF_00144">
    <property type="entry name" value="tRNA_thiouridyl_MnmA"/>
    <property type="match status" value="1"/>
</dbReference>
<dbReference type="InterPro" id="IPR004506">
    <property type="entry name" value="MnmA-like"/>
</dbReference>
<dbReference type="InterPro" id="IPR046885">
    <property type="entry name" value="MnmA-like_C"/>
</dbReference>
<dbReference type="InterPro" id="IPR046884">
    <property type="entry name" value="MnmA-like_central"/>
</dbReference>
<dbReference type="InterPro" id="IPR023382">
    <property type="entry name" value="MnmA-like_central_sf"/>
</dbReference>
<dbReference type="InterPro" id="IPR014729">
    <property type="entry name" value="Rossmann-like_a/b/a_fold"/>
</dbReference>
<dbReference type="NCBIfam" id="NF001138">
    <property type="entry name" value="PRK00143.1"/>
    <property type="match status" value="1"/>
</dbReference>
<dbReference type="NCBIfam" id="TIGR00420">
    <property type="entry name" value="trmU"/>
    <property type="match status" value="1"/>
</dbReference>
<dbReference type="PANTHER" id="PTHR11933:SF5">
    <property type="entry name" value="MITOCHONDRIAL TRNA-SPECIFIC 2-THIOURIDYLASE 1"/>
    <property type="match status" value="1"/>
</dbReference>
<dbReference type="PANTHER" id="PTHR11933">
    <property type="entry name" value="TRNA 5-METHYLAMINOMETHYL-2-THIOURIDYLATE -METHYLTRANSFERASE"/>
    <property type="match status" value="1"/>
</dbReference>
<dbReference type="Pfam" id="PF03054">
    <property type="entry name" value="tRNA_Me_trans"/>
    <property type="match status" value="1"/>
</dbReference>
<dbReference type="Pfam" id="PF20258">
    <property type="entry name" value="tRNA_Me_trans_C"/>
    <property type="match status" value="1"/>
</dbReference>
<dbReference type="Pfam" id="PF20259">
    <property type="entry name" value="tRNA_Me_trans_M"/>
    <property type="match status" value="1"/>
</dbReference>
<dbReference type="SUPFAM" id="SSF52402">
    <property type="entry name" value="Adenine nucleotide alpha hydrolases-like"/>
    <property type="match status" value="1"/>
</dbReference>
<protein>
    <recommendedName>
        <fullName evidence="1">tRNA-specific 2-thiouridylase MnmA</fullName>
        <ecNumber evidence="1">2.8.1.13</ecNumber>
    </recommendedName>
</protein>
<name>MNMA_BORPD</name>
<sequence>MSLASLSVSPGKGRRVVVGMSGGVDSSVTAWLLKQQGYEVIGLFMKNWEDDDDSEYCSTRQDLLDAASVADLVGVDFEYVNFAAEYKDRVFAEFLREYSAGRTPNPDVLCNAEIKFKAFLDHAMTLGAEHIATGHYARVRAIAGAHGREYQLLKALDGSKDQSYFLHRLNQAQLSRTLFPLGEIHKTEVRRIAHDIGLHNAAKKDSTGICFIGERPFREFLNRYLPTEPGDILTPQGQRVGRHHGLSFYTLGQRKGLGVGGVKGSQRDDGTADAWYVARKDLQHNILYVVQGHDHPWLLSNRLQALDASWVAGRAPELRGYGAKTRYRQADAACVLEQASQGAFELSFSQPQWAVTPGQSAVLYDGDVCLGGGIIA</sequence>
<accession>A9IQK6</accession>
<organism>
    <name type="scientific">Bordetella petrii (strain ATCC BAA-461 / DSM 12804 / CCUG 43448)</name>
    <dbReference type="NCBI Taxonomy" id="340100"/>
    <lineage>
        <taxon>Bacteria</taxon>
        <taxon>Pseudomonadati</taxon>
        <taxon>Pseudomonadota</taxon>
        <taxon>Betaproteobacteria</taxon>
        <taxon>Burkholderiales</taxon>
        <taxon>Alcaligenaceae</taxon>
        <taxon>Bordetella</taxon>
    </lineage>
</organism>